<accession>A8YXK7</accession>
<sequence length="101" mass="11745">MDVRDIILRPVITEKSTNLMDDKKYTFDVLLTATKTQVRNAVEEIFDVKVKNVNIMNVRGKDKRVGRYTGKTARRRKAIVTLTNDSNDIKIFQDENKEDNK</sequence>
<protein>
    <recommendedName>
        <fullName evidence="1">Large ribosomal subunit protein uL23</fullName>
    </recommendedName>
    <alternativeName>
        <fullName evidence="2">50S ribosomal protein L23</fullName>
    </alternativeName>
</protein>
<reference key="1">
    <citation type="journal article" date="2008" name="J. Bacteriol.">
        <title>Genome sequence of Lactobacillus helveticus: an organism distinguished by selective gene loss and IS element expansion.</title>
        <authorList>
            <person name="Callanan M."/>
            <person name="Kaleta P."/>
            <person name="O'Callaghan J."/>
            <person name="O'Sullivan O."/>
            <person name="Jordan K."/>
            <person name="McAuliffe O."/>
            <person name="Sangrador-Vegas A."/>
            <person name="Slattery L."/>
            <person name="Fitzgerald G.F."/>
            <person name="Beresford T."/>
            <person name="Ross R.P."/>
        </authorList>
    </citation>
    <scope>NUCLEOTIDE SEQUENCE [LARGE SCALE GENOMIC DNA]</scope>
    <source>
        <strain>DPC 4571</strain>
    </source>
</reference>
<proteinExistence type="inferred from homology"/>
<gene>
    <name evidence="1" type="primary">rplW</name>
    <name type="ordered locus">lhv_0314</name>
</gene>
<dbReference type="EMBL" id="CP000517">
    <property type="protein sequence ID" value="ABX26538.1"/>
    <property type="molecule type" value="Genomic_DNA"/>
</dbReference>
<dbReference type="RefSeq" id="WP_003625782.1">
    <property type="nucleotide sequence ID" value="NC_010080.1"/>
</dbReference>
<dbReference type="SMR" id="A8YXK7"/>
<dbReference type="KEGG" id="lhe:lhv_0314"/>
<dbReference type="eggNOG" id="COG0089">
    <property type="taxonomic scope" value="Bacteria"/>
</dbReference>
<dbReference type="HOGENOM" id="CLU_037562_3_2_9"/>
<dbReference type="Proteomes" id="UP000000790">
    <property type="component" value="Chromosome"/>
</dbReference>
<dbReference type="GO" id="GO:1990904">
    <property type="term" value="C:ribonucleoprotein complex"/>
    <property type="evidence" value="ECO:0007669"/>
    <property type="project" value="UniProtKB-KW"/>
</dbReference>
<dbReference type="GO" id="GO:0005840">
    <property type="term" value="C:ribosome"/>
    <property type="evidence" value="ECO:0007669"/>
    <property type="project" value="UniProtKB-KW"/>
</dbReference>
<dbReference type="GO" id="GO:0019843">
    <property type="term" value="F:rRNA binding"/>
    <property type="evidence" value="ECO:0007669"/>
    <property type="project" value="UniProtKB-UniRule"/>
</dbReference>
<dbReference type="GO" id="GO:0003735">
    <property type="term" value="F:structural constituent of ribosome"/>
    <property type="evidence" value="ECO:0007669"/>
    <property type="project" value="InterPro"/>
</dbReference>
<dbReference type="GO" id="GO:0006412">
    <property type="term" value="P:translation"/>
    <property type="evidence" value="ECO:0007669"/>
    <property type="project" value="UniProtKB-UniRule"/>
</dbReference>
<dbReference type="FunFam" id="3.30.70.330:FF:000001">
    <property type="entry name" value="50S ribosomal protein L23"/>
    <property type="match status" value="1"/>
</dbReference>
<dbReference type="Gene3D" id="3.30.70.330">
    <property type="match status" value="1"/>
</dbReference>
<dbReference type="HAMAP" id="MF_01369_B">
    <property type="entry name" value="Ribosomal_uL23_B"/>
    <property type="match status" value="1"/>
</dbReference>
<dbReference type="InterPro" id="IPR012677">
    <property type="entry name" value="Nucleotide-bd_a/b_plait_sf"/>
</dbReference>
<dbReference type="InterPro" id="IPR013025">
    <property type="entry name" value="Ribosomal_uL23-like"/>
</dbReference>
<dbReference type="InterPro" id="IPR012678">
    <property type="entry name" value="Ribosomal_uL23/eL15/eS24_sf"/>
</dbReference>
<dbReference type="InterPro" id="IPR001014">
    <property type="entry name" value="Ribosomal_uL23_CS"/>
</dbReference>
<dbReference type="NCBIfam" id="NF004363">
    <property type="entry name" value="PRK05738.2-4"/>
    <property type="match status" value="1"/>
</dbReference>
<dbReference type="PANTHER" id="PTHR11620">
    <property type="entry name" value="60S RIBOSOMAL PROTEIN L23A"/>
    <property type="match status" value="1"/>
</dbReference>
<dbReference type="Pfam" id="PF00276">
    <property type="entry name" value="Ribosomal_L23"/>
    <property type="match status" value="1"/>
</dbReference>
<dbReference type="SUPFAM" id="SSF54189">
    <property type="entry name" value="Ribosomal proteins S24e, L23 and L15e"/>
    <property type="match status" value="1"/>
</dbReference>
<dbReference type="PROSITE" id="PS00050">
    <property type="entry name" value="RIBOSOMAL_L23"/>
    <property type="match status" value="1"/>
</dbReference>
<organism>
    <name type="scientific">Lactobacillus helveticus (strain DPC 4571)</name>
    <dbReference type="NCBI Taxonomy" id="405566"/>
    <lineage>
        <taxon>Bacteria</taxon>
        <taxon>Bacillati</taxon>
        <taxon>Bacillota</taxon>
        <taxon>Bacilli</taxon>
        <taxon>Lactobacillales</taxon>
        <taxon>Lactobacillaceae</taxon>
        <taxon>Lactobacillus</taxon>
    </lineage>
</organism>
<evidence type="ECO:0000255" key="1">
    <source>
        <dbReference type="HAMAP-Rule" id="MF_01369"/>
    </source>
</evidence>
<evidence type="ECO:0000305" key="2"/>
<feature type="chain" id="PRO_1000073444" description="Large ribosomal subunit protein uL23">
    <location>
        <begin position="1"/>
        <end position="101"/>
    </location>
</feature>
<comment type="function">
    <text evidence="1">One of the early assembly proteins it binds 23S rRNA. One of the proteins that surrounds the polypeptide exit tunnel on the outside of the ribosome. Forms the main docking site for trigger factor binding to the ribosome.</text>
</comment>
<comment type="subunit">
    <text evidence="1">Part of the 50S ribosomal subunit. Contacts protein L29, and trigger factor when it is bound to the ribosome.</text>
</comment>
<comment type="similarity">
    <text evidence="1">Belongs to the universal ribosomal protein uL23 family.</text>
</comment>
<keyword id="KW-0687">Ribonucleoprotein</keyword>
<keyword id="KW-0689">Ribosomal protein</keyword>
<keyword id="KW-0694">RNA-binding</keyword>
<keyword id="KW-0699">rRNA-binding</keyword>
<name>RL23_LACH4</name>